<accession>P41189</accession>
<evidence type="ECO:0000255" key="1">
    <source>
        <dbReference type="HAMAP-Rule" id="MF_00368"/>
    </source>
</evidence>
<evidence type="ECO:0000305" key="2"/>
<protein>
    <recommendedName>
        <fullName evidence="1">Large ribosomal subunit protein bL12</fullName>
    </recommendedName>
    <alternativeName>
        <fullName evidence="2">50S ribosomal protein L7/L12</fullName>
    </alternativeName>
</protein>
<reference key="1">
    <citation type="journal article" date="1995" name="Curr. Microbiol.">
        <title>Detection and characterization of the African citrus greening Liberobacter by amplification, cloning, and sequencing of the rplKAJL-rpoBC operon.</title>
        <authorList>
            <person name="Planet P."/>
            <person name="Jagoueix S."/>
            <person name="Bove J.M."/>
            <person name="Garnier M."/>
        </authorList>
    </citation>
    <scope>NUCLEOTIDE SEQUENCE [GENOMIC DNA]</scope>
    <source>
        <strain>Nelspruit</strain>
    </source>
</reference>
<proteinExistence type="inferred from homology"/>
<feature type="chain" id="PRO_0000157543" description="Large ribosomal subunit protein bL12">
    <location>
        <begin position="1"/>
        <end position="125"/>
    </location>
</feature>
<gene>
    <name evidence="1" type="primary">rplL</name>
</gene>
<organism>
    <name type="scientific">Liberibacter africanus</name>
    <name type="common">Citrus greening disease</name>
    <name type="synonym">Liberobacter africanum</name>
    <dbReference type="NCBI Taxonomy" id="34020"/>
    <lineage>
        <taxon>Bacteria</taxon>
        <taxon>Pseudomonadati</taxon>
        <taxon>Pseudomonadota</taxon>
        <taxon>Alphaproteobacteria</taxon>
        <taxon>Hyphomicrobiales</taxon>
        <taxon>Rhizobiaceae</taxon>
        <taxon>Liberibacter</taxon>
    </lineage>
</organism>
<comment type="function">
    <text evidence="1">Forms part of the ribosomal stalk which helps the ribosome interact with GTP-bound translation factors. Is thus essential for accurate translation.</text>
</comment>
<comment type="subunit">
    <text evidence="1">Homodimer. Part of the ribosomal stalk of the 50S ribosomal subunit. Forms a multimeric L10(L12)X complex, where L10 forms an elongated spine to which 2 to 4 L12 dimers bind in a sequential fashion. Binds GTP-bound translation factors.</text>
</comment>
<comment type="similarity">
    <text evidence="1">Belongs to the bacterial ribosomal protein bL12 family.</text>
</comment>
<dbReference type="EMBL" id="U09675">
    <property type="protein sequence ID" value="AAA19556.1"/>
    <property type="molecule type" value="Genomic_DNA"/>
</dbReference>
<dbReference type="RefSeq" id="WP_047264429.1">
    <property type="nucleotide sequence ID" value="NZ_CP146613.1"/>
</dbReference>
<dbReference type="SMR" id="P41189"/>
<dbReference type="GO" id="GO:0005737">
    <property type="term" value="C:cytoplasm"/>
    <property type="evidence" value="ECO:0007669"/>
    <property type="project" value="UniProtKB-ARBA"/>
</dbReference>
<dbReference type="GO" id="GO:1990904">
    <property type="term" value="C:ribonucleoprotein complex"/>
    <property type="evidence" value="ECO:0007669"/>
    <property type="project" value="UniProtKB-KW"/>
</dbReference>
<dbReference type="GO" id="GO:0005840">
    <property type="term" value="C:ribosome"/>
    <property type="evidence" value="ECO:0007669"/>
    <property type="project" value="UniProtKB-KW"/>
</dbReference>
<dbReference type="GO" id="GO:0003729">
    <property type="term" value="F:mRNA binding"/>
    <property type="evidence" value="ECO:0007669"/>
    <property type="project" value="TreeGrafter"/>
</dbReference>
<dbReference type="GO" id="GO:0003735">
    <property type="term" value="F:structural constituent of ribosome"/>
    <property type="evidence" value="ECO:0007669"/>
    <property type="project" value="InterPro"/>
</dbReference>
<dbReference type="GO" id="GO:0006412">
    <property type="term" value="P:translation"/>
    <property type="evidence" value="ECO:0007669"/>
    <property type="project" value="UniProtKB-UniRule"/>
</dbReference>
<dbReference type="CDD" id="cd00387">
    <property type="entry name" value="Ribosomal_L7_L12"/>
    <property type="match status" value="1"/>
</dbReference>
<dbReference type="FunFam" id="3.30.1390.10:FF:000001">
    <property type="entry name" value="50S ribosomal protein L7/L12"/>
    <property type="match status" value="1"/>
</dbReference>
<dbReference type="Gene3D" id="3.30.1390.10">
    <property type="match status" value="1"/>
</dbReference>
<dbReference type="Gene3D" id="1.20.5.710">
    <property type="entry name" value="Single helix bin"/>
    <property type="match status" value="1"/>
</dbReference>
<dbReference type="HAMAP" id="MF_00368">
    <property type="entry name" value="Ribosomal_bL12"/>
    <property type="match status" value="1"/>
</dbReference>
<dbReference type="InterPro" id="IPR000206">
    <property type="entry name" value="Ribosomal_bL12"/>
</dbReference>
<dbReference type="InterPro" id="IPR013823">
    <property type="entry name" value="Ribosomal_bL12_C"/>
</dbReference>
<dbReference type="InterPro" id="IPR014719">
    <property type="entry name" value="Ribosomal_bL12_C/ClpS-like"/>
</dbReference>
<dbReference type="InterPro" id="IPR008932">
    <property type="entry name" value="Ribosomal_bL12_oligo"/>
</dbReference>
<dbReference type="InterPro" id="IPR036235">
    <property type="entry name" value="Ribosomal_bL12_oligo_N_sf"/>
</dbReference>
<dbReference type="NCBIfam" id="TIGR00855">
    <property type="entry name" value="L12"/>
    <property type="match status" value="1"/>
</dbReference>
<dbReference type="PANTHER" id="PTHR45987">
    <property type="entry name" value="39S RIBOSOMAL PROTEIN L12"/>
    <property type="match status" value="1"/>
</dbReference>
<dbReference type="PANTHER" id="PTHR45987:SF4">
    <property type="entry name" value="LARGE RIBOSOMAL SUBUNIT PROTEIN BL12M"/>
    <property type="match status" value="1"/>
</dbReference>
<dbReference type="Pfam" id="PF00542">
    <property type="entry name" value="Ribosomal_L12"/>
    <property type="match status" value="1"/>
</dbReference>
<dbReference type="Pfam" id="PF16320">
    <property type="entry name" value="Ribosomal_L12_N"/>
    <property type="match status" value="1"/>
</dbReference>
<dbReference type="SUPFAM" id="SSF54736">
    <property type="entry name" value="ClpS-like"/>
    <property type="match status" value="1"/>
</dbReference>
<dbReference type="SUPFAM" id="SSF48300">
    <property type="entry name" value="Ribosomal protein L7/12, oligomerisation (N-terminal) domain"/>
    <property type="match status" value="1"/>
</dbReference>
<keyword id="KW-0687">Ribonucleoprotein</keyword>
<keyword id="KW-0689">Ribosomal protein</keyword>
<name>RL7_LIBAF</name>
<sequence>MSNIESIVEKLSSLTLLQAAELSKRLEEEWGVSAAAPVAVVASAAGESAAAVAEKTEFEVFLEGFDAKKKISVIKEVRAITELGLKEAKDFVESAPKSLKTGVSKDEAEELKKKLEAAGATIILR</sequence>